<evidence type="ECO:0000255" key="1">
    <source>
        <dbReference type="HAMAP-Rule" id="MF_00537"/>
    </source>
</evidence>
<evidence type="ECO:0000305" key="2"/>
<feature type="chain" id="PRO_1000128559" description="Small ribosomal subunit protein uS14">
    <location>
        <begin position="1"/>
        <end position="101"/>
    </location>
</feature>
<comment type="function">
    <text evidence="1">Binds 16S rRNA, required for the assembly of 30S particles and may also be responsible for determining the conformation of the 16S rRNA at the A site.</text>
</comment>
<comment type="subunit">
    <text evidence="1">Part of the 30S ribosomal subunit. Contacts proteins S3 and S10.</text>
</comment>
<comment type="similarity">
    <text evidence="1">Belongs to the universal ribosomal protein uS14 family.</text>
</comment>
<sequence>MAKQSMKAREVKRVALADKYFAKRAELKAIISDVNATDEDRWNAVLKLQTLPRDSSPSRQRNRCRQTGRPHAFLRKFGLSRIKVREAAMRGEIPGLKKASW</sequence>
<protein>
    <recommendedName>
        <fullName evidence="1">Small ribosomal subunit protein uS14</fullName>
    </recommendedName>
    <alternativeName>
        <fullName evidence="2">30S ribosomal protein S14</fullName>
    </alternativeName>
</protein>
<accession>B5FJK1</accession>
<keyword id="KW-0687">Ribonucleoprotein</keyword>
<keyword id="KW-0689">Ribosomal protein</keyword>
<keyword id="KW-0694">RNA-binding</keyword>
<keyword id="KW-0699">rRNA-binding</keyword>
<dbReference type="EMBL" id="CP001144">
    <property type="protein sequence ID" value="ACH76782.1"/>
    <property type="molecule type" value="Genomic_DNA"/>
</dbReference>
<dbReference type="RefSeq" id="WP_001118932.1">
    <property type="nucleotide sequence ID" value="NC_011205.1"/>
</dbReference>
<dbReference type="SMR" id="B5FJK1"/>
<dbReference type="GeneID" id="66757762"/>
<dbReference type="KEGG" id="sed:SeD_A3794"/>
<dbReference type="HOGENOM" id="CLU_139869_0_1_6"/>
<dbReference type="Proteomes" id="UP000008322">
    <property type="component" value="Chromosome"/>
</dbReference>
<dbReference type="GO" id="GO:0005737">
    <property type="term" value="C:cytoplasm"/>
    <property type="evidence" value="ECO:0007669"/>
    <property type="project" value="UniProtKB-ARBA"/>
</dbReference>
<dbReference type="GO" id="GO:0015935">
    <property type="term" value="C:small ribosomal subunit"/>
    <property type="evidence" value="ECO:0007669"/>
    <property type="project" value="TreeGrafter"/>
</dbReference>
<dbReference type="GO" id="GO:0019843">
    <property type="term" value="F:rRNA binding"/>
    <property type="evidence" value="ECO:0007669"/>
    <property type="project" value="UniProtKB-UniRule"/>
</dbReference>
<dbReference type="GO" id="GO:0003735">
    <property type="term" value="F:structural constituent of ribosome"/>
    <property type="evidence" value="ECO:0007669"/>
    <property type="project" value="InterPro"/>
</dbReference>
<dbReference type="GO" id="GO:0006412">
    <property type="term" value="P:translation"/>
    <property type="evidence" value="ECO:0007669"/>
    <property type="project" value="UniProtKB-UniRule"/>
</dbReference>
<dbReference type="FunFam" id="1.10.287.1480:FF:000001">
    <property type="entry name" value="30S ribosomal protein S14"/>
    <property type="match status" value="1"/>
</dbReference>
<dbReference type="Gene3D" id="1.10.287.1480">
    <property type="match status" value="1"/>
</dbReference>
<dbReference type="HAMAP" id="MF_00537">
    <property type="entry name" value="Ribosomal_uS14_1"/>
    <property type="match status" value="1"/>
</dbReference>
<dbReference type="InterPro" id="IPR001209">
    <property type="entry name" value="Ribosomal_uS14"/>
</dbReference>
<dbReference type="InterPro" id="IPR023036">
    <property type="entry name" value="Ribosomal_uS14_bac/plastid"/>
</dbReference>
<dbReference type="InterPro" id="IPR018271">
    <property type="entry name" value="Ribosomal_uS14_CS"/>
</dbReference>
<dbReference type="NCBIfam" id="NF006477">
    <property type="entry name" value="PRK08881.1"/>
    <property type="match status" value="1"/>
</dbReference>
<dbReference type="PANTHER" id="PTHR19836">
    <property type="entry name" value="30S RIBOSOMAL PROTEIN S14"/>
    <property type="match status" value="1"/>
</dbReference>
<dbReference type="PANTHER" id="PTHR19836:SF19">
    <property type="entry name" value="SMALL RIBOSOMAL SUBUNIT PROTEIN US14M"/>
    <property type="match status" value="1"/>
</dbReference>
<dbReference type="Pfam" id="PF00253">
    <property type="entry name" value="Ribosomal_S14"/>
    <property type="match status" value="1"/>
</dbReference>
<dbReference type="SUPFAM" id="SSF57716">
    <property type="entry name" value="Glucocorticoid receptor-like (DNA-binding domain)"/>
    <property type="match status" value="1"/>
</dbReference>
<dbReference type="PROSITE" id="PS00527">
    <property type="entry name" value="RIBOSOMAL_S14"/>
    <property type="match status" value="1"/>
</dbReference>
<name>RS14_SALDC</name>
<reference key="1">
    <citation type="journal article" date="2011" name="J. Bacteriol.">
        <title>Comparative genomics of 28 Salmonella enterica isolates: evidence for CRISPR-mediated adaptive sublineage evolution.</title>
        <authorList>
            <person name="Fricke W.F."/>
            <person name="Mammel M.K."/>
            <person name="McDermott P.F."/>
            <person name="Tartera C."/>
            <person name="White D.G."/>
            <person name="Leclerc J.E."/>
            <person name="Ravel J."/>
            <person name="Cebula T.A."/>
        </authorList>
    </citation>
    <scope>NUCLEOTIDE SEQUENCE [LARGE SCALE GENOMIC DNA]</scope>
    <source>
        <strain>CT_02021853</strain>
    </source>
</reference>
<proteinExistence type="inferred from homology"/>
<organism>
    <name type="scientific">Salmonella dublin (strain CT_02021853)</name>
    <dbReference type="NCBI Taxonomy" id="439851"/>
    <lineage>
        <taxon>Bacteria</taxon>
        <taxon>Pseudomonadati</taxon>
        <taxon>Pseudomonadota</taxon>
        <taxon>Gammaproteobacteria</taxon>
        <taxon>Enterobacterales</taxon>
        <taxon>Enterobacteriaceae</taxon>
        <taxon>Salmonella</taxon>
    </lineage>
</organism>
<gene>
    <name evidence="1" type="primary">rpsN</name>
    <name type="ordered locus">SeD_A3794</name>
</gene>